<reference key="1">
    <citation type="journal article" date="1992" name="Biochim. Biophys. Acta">
        <title>Sequence characterization of a sheep cDNA for antithrombin III.</title>
        <authorList>
            <person name="Niessen R.W.L.M."/>
            <person name="Sturk A."/>
            <person name="Hordijk P.L."/>
            <person name="Michiels F."/>
            <person name="Peters M."/>
        </authorList>
    </citation>
    <scope>NUCLEOTIDE SEQUENCE [MRNA]</scope>
</reference>
<sequence>MISNGIGTVTTGKRSMCLFPLLLIGLWGCVTCHRSPVEDICTAKPRDIPVNPMCIYRSPEKKATEGEGSEQKIPGATNRRVWELSKANSHFATAFYQHLADSKNNNDNIFLSPLSISTAFAMTKLGACNNTLKQLMEVFKFDTISEKTSDQIHFFFAKLNCRLYRKANKSSELVSANRLFGDKSITFNETYQDISEVVYGAKLQPLDFKGNAEQSRLTINQWISNKTEGRITDVIPPQAIDEFTVLVLVNTIYFKGLWKSKFSPENTKKELFYKADGESCSVPMMYQEGKFRYRRVAEGTQVLELPFKGDDITMVLILPKLEKPLAKVERELTPDMLQEWLDELTETLLVVHMPHFRIEDSFSVKEQLQDMGLEDLFSPEKSRLPGIVAEGRNDLYVSDAFHKAFLEVNEEGSEAAASTVISIAGRSLNLNRVTFQANRPFLVLIREVALNTIIFMGRVANPCVN</sequence>
<comment type="function">
    <text evidence="1">Most important serine protease inhibitor in plasma that regulates the blood coagulation cascade. AT-III inhibits thrombin, matriptase-3/TMPRSS7, as well as factors IXa, Xa and XIa. Its inhibitory activity is greatly enhanced in the presence of heparin (By similarity).</text>
</comment>
<comment type="subunit">
    <text evidence="1">Forms protease inhibiting heterodimer with TMPRSS7.</text>
</comment>
<comment type="subcellular location">
    <subcellularLocation>
        <location evidence="1">Secreted</location>
        <location evidence="1">Extracellular space</location>
    </subcellularLocation>
</comment>
<comment type="tissue specificity">
    <text>Plasma.</text>
</comment>
<comment type="PTM">
    <text evidence="2">Phosphorylated by FAM20C in the extracellular medium.</text>
</comment>
<comment type="similarity">
    <text evidence="4">Belongs to the serpin family.</text>
</comment>
<gene>
    <name type="primary">SERPINC1</name>
    <name type="synonym">AT3</name>
</gene>
<dbReference type="EMBL" id="X68287">
    <property type="protein sequence ID" value="CAA48347.1"/>
    <property type="molecule type" value="mRNA"/>
</dbReference>
<dbReference type="PIR" id="S28219">
    <property type="entry name" value="S28219"/>
</dbReference>
<dbReference type="RefSeq" id="NP_001009393.1">
    <property type="nucleotide sequence ID" value="NM_001009393.1"/>
</dbReference>
<dbReference type="SMR" id="P32262"/>
<dbReference type="STRING" id="9940.ENSOARP00000013845"/>
<dbReference type="MEROPS" id="I04.018"/>
<dbReference type="GlyCosmos" id="P32262">
    <property type="glycosylation" value="4 sites, No reported glycans"/>
</dbReference>
<dbReference type="PaxDb" id="9940-ENSOARP00000013845"/>
<dbReference type="Ensembl" id="ENSOART00185052104">
    <property type="protein sequence ID" value="ENSOARP00185026603"/>
    <property type="gene ID" value="ENSOARG00185031277"/>
</dbReference>
<dbReference type="Ensembl" id="ENSOART00220044062">
    <property type="protein sequence ID" value="ENSOARP00220023818"/>
    <property type="gene ID" value="ENSOARG00220026372"/>
</dbReference>
<dbReference type="GeneID" id="443407"/>
<dbReference type="KEGG" id="oas:443407"/>
<dbReference type="CTD" id="462"/>
<dbReference type="eggNOG" id="KOG2392">
    <property type="taxonomic scope" value="Eukaryota"/>
</dbReference>
<dbReference type="OrthoDB" id="9440847at2759"/>
<dbReference type="Proteomes" id="UP000002356">
    <property type="component" value="Unplaced"/>
</dbReference>
<dbReference type="GO" id="GO:0005615">
    <property type="term" value="C:extracellular space"/>
    <property type="evidence" value="ECO:0007669"/>
    <property type="project" value="InterPro"/>
</dbReference>
<dbReference type="GO" id="GO:0008201">
    <property type="term" value="F:heparin binding"/>
    <property type="evidence" value="ECO:0007669"/>
    <property type="project" value="UniProtKB-KW"/>
</dbReference>
<dbReference type="GO" id="GO:0004867">
    <property type="term" value="F:serine-type endopeptidase inhibitor activity"/>
    <property type="evidence" value="ECO:0007669"/>
    <property type="project" value="UniProtKB-KW"/>
</dbReference>
<dbReference type="GO" id="GO:0007596">
    <property type="term" value="P:blood coagulation"/>
    <property type="evidence" value="ECO:0007669"/>
    <property type="project" value="UniProtKB-KW"/>
</dbReference>
<dbReference type="GO" id="GO:0030193">
    <property type="term" value="P:regulation of blood coagulation"/>
    <property type="evidence" value="ECO:0007669"/>
    <property type="project" value="InterPro"/>
</dbReference>
<dbReference type="CDD" id="cd02045">
    <property type="entry name" value="serpinC1_AT3"/>
    <property type="match status" value="1"/>
</dbReference>
<dbReference type="FunFam" id="3.30.497.10:FF:000008">
    <property type="entry name" value="antithrombin-III isoform X1"/>
    <property type="match status" value="1"/>
</dbReference>
<dbReference type="FunFam" id="2.10.310.10:FF:000001">
    <property type="entry name" value="Serpin family A member 1"/>
    <property type="match status" value="1"/>
</dbReference>
<dbReference type="Gene3D" id="2.30.39.10">
    <property type="entry name" value="Alpha-1-antitrypsin, domain 1"/>
    <property type="match status" value="1"/>
</dbReference>
<dbReference type="Gene3D" id="3.30.497.10">
    <property type="entry name" value="Antithrombin, subunit I, domain 2"/>
    <property type="match status" value="1"/>
</dbReference>
<dbReference type="InterPro" id="IPR033829">
    <property type="entry name" value="Antithrombin_3_serpin_domain"/>
</dbReference>
<dbReference type="InterPro" id="IPR023795">
    <property type="entry name" value="Serpin_CS"/>
</dbReference>
<dbReference type="InterPro" id="IPR023796">
    <property type="entry name" value="Serpin_dom"/>
</dbReference>
<dbReference type="InterPro" id="IPR000215">
    <property type="entry name" value="Serpin_fam"/>
</dbReference>
<dbReference type="InterPro" id="IPR036186">
    <property type="entry name" value="Serpin_sf"/>
</dbReference>
<dbReference type="InterPro" id="IPR042178">
    <property type="entry name" value="Serpin_sf_1"/>
</dbReference>
<dbReference type="InterPro" id="IPR042185">
    <property type="entry name" value="Serpin_sf_2"/>
</dbReference>
<dbReference type="PANTHER" id="PTHR11461:SF53">
    <property type="entry name" value="ANTITHROMBIN-III"/>
    <property type="match status" value="1"/>
</dbReference>
<dbReference type="PANTHER" id="PTHR11461">
    <property type="entry name" value="SERINE PROTEASE INHIBITOR, SERPIN"/>
    <property type="match status" value="1"/>
</dbReference>
<dbReference type="Pfam" id="PF00079">
    <property type="entry name" value="Serpin"/>
    <property type="match status" value="1"/>
</dbReference>
<dbReference type="SMART" id="SM00093">
    <property type="entry name" value="SERPIN"/>
    <property type="match status" value="1"/>
</dbReference>
<dbReference type="SUPFAM" id="SSF56574">
    <property type="entry name" value="Serpins"/>
    <property type="match status" value="1"/>
</dbReference>
<dbReference type="PROSITE" id="PS00284">
    <property type="entry name" value="SERPIN"/>
    <property type="match status" value="1"/>
</dbReference>
<proteinExistence type="evidence at transcript level"/>
<accession>P32262</accession>
<organism>
    <name type="scientific">Ovis aries</name>
    <name type="common">Sheep</name>
    <dbReference type="NCBI Taxonomy" id="9940"/>
    <lineage>
        <taxon>Eukaryota</taxon>
        <taxon>Metazoa</taxon>
        <taxon>Chordata</taxon>
        <taxon>Craniata</taxon>
        <taxon>Vertebrata</taxon>
        <taxon>Euteleostomi</taxon>
        <taxon>Mammalia</taxon>
        <taxon>Eutheria</taxon>
        <taxon>Laurasiatheria</taxon>
        <taxon>Artiodactyla</taxon>
        <taxon>Ruminantia</taxon>
        <taxon>Pecora</taxon>
        <taxon>Bovidae</taxon>
        <taxon>Caprinae</taxon>
        <taxon>Ovis</taxon>
    </lineage>
</organism>
<keyword id="KW-0094">Blood coagulation</keyword>
<keyword id="KW-1015">Disulfide bond</keyword>
<keyword id="KW-0325">Glycoprotein</keyword>
<keyword id="KW-0356">Hemostasis</keyword>
<keyword id="KW-0358">Heparin-binding</keyword>
<keyword id="KW-0597">Phosphoprotein</keyword>
<keyword id="KW-0646">Protease inhibitor</keyword>
<keyword id="KW-1185">Reference proteome</keyword>
<keyword id="KW-0964">Secreted</keyword>
<keyword id="KW-0722">Serine protease inhibitor</keyword>
<keyword id="KW-0732">Signal</keyword>
<name>ANT3_SHEEP</name>
<protein>
    <recommendedName>
        <fullName>Antithrombin-III</fullName>
        <shortName>ATIII</shortName>
    </recommendedName>
    <alternativeName>
        <fullName>Serpin C1</fullName>
    </alternativeName>
</protein>
<evidence type="ECO:0000250" key="1"/>
<evidence type="ECO:0000250" key="2">
    <source>
        <dbReference type="UniProtKB" id="P01008"/>
    </source>
</evidence>
<evidence type="ECO:0000255" key="3"/>
<evidence type="ECO:0000305" key="4"/>
<feature type="signal peptide" evidence="1">
    <location>
        <begin position="1"/>
        <end position="32"/>
    </location>
</feature>
<feature type="chain" id="PRO_0000032492" description="Antithrombin-III">
    <location>
        <begin position="33"/>
        <end position="465"/>
    </location>
</feature>
<feature type="binding site" evidence="1">
    <location>
        <position position="82"/>
    </location>
    <ligand>
        <name>heparin</name>
        <dbReference type="ChEBI" id="CHEBI:28304"/>
    </ligand>
</feature>
<feature type="binding site" evidence="1">
    <location>
        <position position="162"/>
    </location>
    <ligand>
        <name>heparin</name>
        <dbReference type="ChEBI" id="CHEBI:28304"/>
    </ligand>
</feature>
<feature type="binding site" evidence="1">
    <location>
        <position position="178"/>
    </location>
    <ligand>
        <name>heparin</name>
        <dbReference type="ChEBI" id="CHEBI:28304"/>
    </ligand>
</feature>
<feature type="site" description="Reactive bond">
    <location>
        <begin position="426"/>
        <end position="427"/>
    </location>
</feature>
<feature type="modified residue" description="Phosphothreonine" evidence="2">
    <location>
        <position position="64"/>
    </location>
</feature>
<feature type="modified residue" description="Phosphoserine" evidence="2">
    <location>
        <position position="69"/>
    </location>
</feature>
<feature type="glycosylation site" description="N-linked (GlcNAc...) asparagine" evidence="3">
    <location>
        <position position="129"/>
    </location>
</feature>
<feature type="glycosylation site" description="N-linked (GlcNAc...) asparagine" evidence="3">
    <location>
        <position position="168"/>
    </location>
</feature>
<feature type="glycosylation site" description="N-linked (GlcNAc...) asparagine" evidence="3">
    <location>
        <position position="188"/>
    </location>
</feature>
<feature type="glycosylation site" description="N-linked (GlcNAc...) asparagine" evidence="3">
    <location>
        <position position="225"/>
    </location>
</feature>
<feature type="disulfide bond" evidence="1">
    <location>
        <begin position="41"/>
        <end position="161"/>
    </location>
</feature>
<feature type="disulfide bond" evidence="1">
    <location>
        <begin position="54"/>
        <end position="128"/>
    </location>
</feature>
<feature type="disulfide bond" evidence="1">
    <location>
        <begin position="280"/>
        <end position="463"/>
    </location>
</feature>